<evidence type="ECO:0000255" key="1">
    <source>
        <dbReference type="HAMAP-Rule" id="MF_01554"/>
    </source>
</evidence>
<evidence type="ECO:0000305" key="2"/>
<comment type="function">
    <text evidence="1">Catalyzes the conversion of glucosamine-6-phosphate to glucosamine-1-phosphate.</text>
</comment>
<comment type="catalytic activity">
    <reaction evidence="1">
        <text>alpha-D-glucosamine 1-phosphate = D-glucosamine 6-phosphate</text>
        <dbReference type="Rhea" id="RHEA:23424"/>
        <dbReference type="ChEBI" id="CHEBI:58516"/>
        <dbReference type="ChEBI" id="CHEBI:58725"/>
        <dbReference type="EC" id="5.4.2.10"/>
    </reaction>
</comment>
<comment type="cofactor">
    <cofactor evidence="1">
        <name>Mg(2+)</name>
        <dbReference type="ChEBI" id="CHEBI:18420"/>
    </cofactor>
    <text evidence="1">Binds 1 Mg(2+) ion per subunit.</text>
</comment>
<comment type="PTM">
    <text evidence="1">Activated by phosphorylation.</text>
</comment>
<comment type="similarity">
    <text evidence="1">Belongs to the phosphohexose mutase family.</text>
</comment>
<comment type="sequence caution" evidence="2">
    <conflict type="erroneous initiation">
        <sequence resource="EMBL-CDS" id="AAA17297"/>
    </conflict>
</comment>
<organism>
    <name type="scientific">Mycobacterium leprae (strain TN)</name>
    <dbReference type="NCBI Taxonomy" id="272631"/>
    <lineage>
        <taxon>Bacteria</taxon>
        <taxon>Bacillati</taxon>
        <taxon>Actinomycetota</taxon>
        <taxon>Actinomycetes</taxon>
        <taxon>Mycobacteriales</taxon>
        <taxon>Mycobacteriaceae</taxon>
        <taxon>Mycobacterium</taxon>
    </lineage>
</organism>
<accession>Q49869</accession>
<accession>Q49862</accession>
<dbReference type="EC" id="5.4.2.10" evidence="1"/>
<dbReference type="EMBL" id="U00020">
    <property type="protein sequence ID" value="AAA17306.1"/>
    <property type="molecule type" value="Genomic_DNA"/>
</dbReference>
<dbReference type="EMBL" id="U00020">
    <property type="protein sequence ID" value="AAA17297.1"/>
    <property type="status" value="ALT_INIT"/>
    <property type="molecule type" value="Genomic_DNA"/>
</dbReference>
<dbReference type="EMBL" id="AL583918">
    <property type="protein sequence ID" value="CAC29874.1"/>
    <property type="molecule type" value="Genomic_DNA"/>
</dbReference>
<dbReference type="PIR" id="S72992">
    <property type="entry name" value="S72992"/>
</dbReference>
<dbReference type="RefSeq" id="NP_301362.1">
    <property type="nucleotide sequence ID" value="NC_002677.1"/>
</dbReference>
<dbReference type="RefSeq" id="WP_010907686.1">
    <property type="nucleotide sequence ID" value="NC_002677.1"/>
</dbReference>
<dbReference type="SMR" id="Q49869"/>
<dbReference type="STRING" id="272631.gene:17574185"/>
<dbReference type="KEGG" id="mle:ML0366"/>
<dbReference type="PATRIC" id="fig|272631.5.peg.618"/>
<dbReference type="Leproma" id="ML0366"/>
<dbReference type="eggNOG" id="COG1109">
    <property type="taxonomic scope" value="Bacteria"/>
</dbReference>
<dbReference type="HOGENOM" id="CLU_016950_7_0_11"/>
<dbReference type="OrthoDB" id="9803322at2"/>
<dbReference type="Proteomes" id="UP000000806">
    <property type="component" value="Chromosome"/>
</dbReference>
<dbReference type="GO" id="GO:0005829">
    <property type="term" value="C:cytosol"/>
    <property type="evidence" value="ECO:0007669"/>
    <property type="project" value="TreeGrafter"/>
</dbReference>
<dbReference type="GO" id="GO:0000287">
    <property type="term" value="F:magnesium ion binding"/>
    <property type="evidence" value="ECO:0007669"/>
    <property type="project" value="UniProtKB-UniRule"/>
</dbReference>
<dbReference type="GO" id="GO:0008966">
    <property type="term" value="F:phosphoglucosamine mutase activity"/>
    <property type="evidence" value="ECO:0007669"/>
    <property type="project" value="UniProtKB-UniRule"/>
</dbReference>
<dbReference type="GO" id="GO:0004615">
    <property type="term" value="F:phosphomannomutase activity"/>
    <property type="evidence" value="ECO:0007669"/>
    <property type="project" value="TreeGrafter"/>
</dbReference>
<dbReference type="GO" id="GO:0005975">
    <property type="term" value="P:carbohydrate metabolic process"/>
    <property type="evidence" value="ECO:0007669"/>
    <property type="project" value="InterPro"/>
</dbReference>
<dbReference type="GO" id="GO:0009252">
    <property type="term" value="P:peptidoglycan biosynthetic process"/>
    <property type="evidence" value="ECO:0007669"/>
    <property type="project" value="TreeGrafter"/>
</dbReference>
<dbReference type="GO" id="GO:0006048">
    <property type="term" value="P:UDP-N-acetylglucosamine biosynthetic process"/>
    <property type="evidence" value="ECO:0007669"/>
    <property type="project" value="TreeGrafter"/>
</dbReference>
<dbReference type="CDD" id="cd05802">
    <property type="entry name" value="GlmM"/>
    <property type="match status" value="1"/>
</dbReference>
<dbReference type="FunFam" id="3.30.310.50:FF:000001">
    <property type="entry name" value="Phosphoglucosamine mutase"/>
    <property type="match status" value="1"/>
</dbReference>
<dbReference type="FunFam" id="3.40.120.10:FF:000001">
    <property type="entry name" value="Phosphoglucosamine mutase"/>
    <property type="match status" value="1"/>
</dbReference>
<dbReference type="FunFam" id="3.40.120.10:FF:000002">
    <property type="entry name" value="Phosphoglucosamine mutase"/>
    <property type="match status" value="1"/>
</dbReference>
<dbReference type="Gene3D" id="3.40.120.10">
    <property type="entry name" value="Alpha-D-Glucose-1,6-Bisphosphate, subunit A, domain 3"/>
    <property type="match status" value="3"/>
</dbReference>
<dbReference type="Gene3D" id="3.30.310.50">
    <property type="entry name" value="Alpha-D-phosphohexomutase, C-terminal domain"/>
    <property type="match status" value="1"/>
</dbReference>
<dbReference type="HAMAP" id="MF_01554_B">
    <property type="entry name" value="GlmM_B"/>
    <property type="match status" value="1"/>
</dbReference>
<dbReference type="InterPro" id="IPR005844">
    <property type="entry name" value="A-D-PHexomutase_a/b/a-I"/>
</dbReference>
<dbReference type="InterPro" id="IPR016055">
    <property type="entry name" value="A-D-PHexomutase_a/b/a-I/II/III"/>
</dbReference>
<dbReference type="InterPro" id="IPR005845">
    <property type="entry name" value="A-D-PHexomutase_a/b/a-II"/>
</dbReference>
<dbReference type="InterPro" id="IPR005846">
    <property type="entry name" value="A-D-PHexomutase_a/b/a-III"/>
</dbReference>
<dbReference type="InterPro" id="IPR005843">
    <property type="entry name" value="A-D-PHexomutase_C"/>
</dbReference>
<dbReference type="InterPro" id="IPR036900">
    <property type="entry name" value="A-D-PHexomutase_C_sf"/>
</dbReference>
<dbReference type="InterPro" id="IPR016066">
    <property type="entry name" value="A-D-PHexomutase_CS"/>
</dbReference>
<dbReference type="InterPro" id="IPR005841">
    <property type="entry name" value="Alpha-D-phosphohexomutase_SF"/>
</dbReference>
<dbReference type="InterPro" id="IPR006352">
    <property type="entry name" value="GlmM_bact"/>
</dbReference>
<dbReference type="InterPro" id="IPR050060">
    <property type="entry name" value="Phosphoglucosamine_mutase"/>
</dbReference>
<dbReference type="NCBIfam" id="TIGR01455">
    <property type="entry name" value="glmM"/>
    <property type="match status" value="1"/>
</dbReference>
<dbReference type="PANTHER" id="PTHR42946:SF1">
    <property type="entry name" value="PHOSPHOGLUCOMUTASE (ALPHA-D-GLUCOSE-1,6-BISPHOSPHATE-DEPENDENT)"/>
    <property type="match status" value="1"/>
</dbReference>
<dbReference type="PANTHER" id="PTHR42946">
    <property type="entry name" value="PHOSPHOHEXOSE MUTASE"/>
    <property type="match status" value="1"/>
</dbReference>
<dbReference type="Pfam" id="PF02878">
    <property type="entry name" value="PGM_PMM_I"/>
    <property type="match status" value="1"/>
</dbReference>
<dbReference type="Pfam" id="PF02879">
    <property type="entry name" value="PGM_PMM_II"/>
    <property type="match status" value="1"/>
</dbReference>
<dbReference type="Pfam" id="PF02880">
    <property type="entry name" value="PGM_PMM_III"/>
    <property type="match status" value="1"/>
</dbReference>
<dbReference type="Pfam" id="PF00408">
    <property type="entry name" value="PGM_PMM_IV"/>
    <property type="match status" value="1"/>
</dbReference>
<dbReference type="PRINTS" id="PR00509">
    <property type="entry name" value="PGMPMM"/>
</dbReference>
<dbReference type="SUPFAM" id="SSF55957">
    <property type="entry name" value="Phosphoglucomutase, C-terminal domain"/>
    <property type="match status" value="1"/>
</dbReference>
<dbReference type="SUPFAM" id="SSF53738">
    <property type="entry name" value="Phosphoglucomutase, first 3 domains"/>
    <property type="match status" value="3"/>
</dbReference>
<dbReference type="PROSITE" id="PS00710">
    <property type="entry name" value="PGM_PMM"/>
    <property type="match status" value="1"/>
</dbReference>
<reference key="1">
    <citation type="submission" date="1994-03" db="EMBL/GenBank/DDBJ databases">
        <authorList>
            <person name="Smith D.R."/>
            <person name="Robison K."/>
        </authorList>
    </citation>
    <scope>NUCLEOTIDE SEQUENCE [GENOMIC DNA]</scope>
</reference>
<reference key="2">
    <citation type="journal article" date="2001" name="Nature">
        <title>Massive gene decay in the leprosy bacillus.</title>
        <authorList>
            <person name="Cole S.T."/>
            <person name="Eiglmeier K."/>
            <person name="Parkhill J."/>
            <person name="James K.D."/>
            <person name="Thomson N.R."/>
            <person name="Wheeler P.R."/>
            <person name="Honore N."/>
            <person name="Garnier T."/>
            <person name="Churcher C.M."/>
            <person name="Harris D.E."/>
            <person name="Mungall K.L."/>
            <person name="Basham D."/>
            <person name="Brown D."/>
            <person name="Chillingworth T."/>
            <person name="Connor R."/>
            <person name="Davies R.M."/>
            <person name="Devlin K."/>
            <person name="Duthoy S."/>
            <person name="Feltwell T."/>
            <person name="Fraser A."/>
            <person name="Hamlin N."/>
            <person name="Holroyd S."/>
            <person name="Hornsby T."/>
            <person name="Jagels K."/>
            <person name="Lacroix C."/>
            <person name="Maclean J."/>
            <person name="Moule S."/>
            <person name="Murphy L.D."/>
            <person name="Oliver K."/>
            <person name="Quail M.A."/>
            <person name="Rajandream M.A."/>
            <person name="Rutherford K.M."/>
            <person name="Rutter S."/>
            <person name="Seeger K."/>
            <person name="Simon S."/>
            <person name="Simmonds M."/>
            <person name="Skelton J."/>
            <person name="Squares R."/>
            <person name="Squares S."/>
            <person name="Stevens K."/>
            <person name="Taylor K."/>
            <person name="Whitehead S."/>
            <person name="Woodward J.R."/>
            <person name="Barrell B.G."/>
        </authorList>
    </citation>
    <scope>NUCLEOTIDE SEQUENCE [LARGE SCALE GENOMIC DNA]</scope>
    <source>
        <strain>TN</strain>
    </source>
</reference>
<sequence>MGRLFGTDGVRGVANRELTPELVLALGAAAARCLANSGEPGRRVAVIGRDPRASGEMLEAAVIAGLTSAGVDALRVGVLPTPAVAYLTGAYDADFGVMISASHNPMVDNGIKIFGPGGHKLDDDTEDQIEDLVTGGPGLRPAGVAIGRVIDAEDATERYLRHVGKASTIRLDGLTVVVDCAHGAASSAAPRAYRAAGARVIAINADPNGININDRCGSTDLGSLRSAVLAHRADLGLAHDGDADRCLAVDANGDLVDGDAIMVVLALAMQEAGELSSNTLVTTVMSNLGLHLAMRSVGVIVRTTDVGDRYVLEELRAGDFSLGGEQSGHIVMPALGSTGDGIITGLRLMTRMVQTSSSLAALASAMRALPQVLINVEVADKTTAAAAPLVQTAVETAEVELGNTGRILLRPSGTEPMIRVMVEAAEEDVAHRVATRVAAAVSAQGSPLRCWNPDAISGVELRL</sequence>
<protein>
    <recommendedName>
        <fullName evidence="1">Phosphoglucosamine mutase</fullName>
        <ecNumber evidence="1">5.4.2.10</ecNumber>
    </recommendedName>
</protein>
<gene>
    <name evidence="1" type="primary">glmM</name>
    <name type="ordered locus">ML0366</name>
</gene>
<proteinExistence type="inferred from homology"/>
<keyword id="KW-0413">Isomerase</keyword>
<keyword id="KW-0460">Magnesium</keyword>
<keyword id="KW-0479">Metal-binding</keyword>
<keyword id="KW-0597">Phosphoprotein</keyword>
<keyword id="KW-1185">Reference proteome</keyword>
<feature type="chain" id="PRO_0000147916" description="Phosphoglucosamine mutase">
    <location>
        <begin position="1"/>
        <end position="463"/>
    </location>
</feature>
<feature type="active site" description="Phosphoserine intermediate" evidence="1">
    <location>
        <position position="102"/>
    </location>
</feature>
<feature type="binding site" description="via phosphate group" evidence="1">
    <location>
        <position position="102"/>
    </location>
    <ligand>
        <name>Mg(2+)</name>
        <dbReference type="ChEBI" id="CHEBI:18420"/>
    </ligand>
</feature>
<feature type="binding site" evidence="1">
    <location>
        <position position="240"/>
    </location>
    <ligand>
        <name>Mg(2+)</name>
        <dbReference type="ChEBI" id="CHEBI:18420"/>
    </ligand>
</feature>
<feature type="binding site" evidence="1">
    <location>
        <position position="242"/>
    </location>
    <ligand>
        <name>Mg(2+)</name>
        <dbReference type="ChEBI" id="CHEBI:18420"/>
    </ligand>
</feature>
<feature type="binding site" evidence="1">
    <location>
        <position position="244"/>
    </location>
    <ligand>
        <name>Mg(2+)</name>
        <dbReference type="ChEBI" id="CHEBI:18420"/>
    </ligand>
</feature>
<feature type="modified residue" description="Phosphoserine" evidence="1">
    <location>
        <position position="102"/>
    </location>
</feature>
<name>GLMM_MYCLE</name>